<evidence type="ECO:0000255" key="1">
    <source>
        <dbReference type="HAMAP-Rule" id="MF_00170"/>
    </source>
</evidence>
<dbReference type="EC" id="5.3.1.6" evidence="1"/>
<dbReference type="EMBL" id="CP000738">
    <property type="protein sequence ID" value="ABR60414.1"/>
    <property type="molecule type" value="Genomic_DNA"/>
</dbReference>
<dbReference type="RefSeq" id="WP_011975722.1">
    <property type="nucleotide sequence ID" value="NC_009636.1"/>
</dbReference>
<dbReference type="RefSeq" id="YP_001327249.1">
    <property type="nucleotide sequence ID" value="NC_009636.1"/>
</dbReference>
<dbReference type="SMR" id="A6U9T4"/>
<dbReference type="STRING" id="366394.Smed_1573"/>
<dbReference type="GeneID" id="61612806"/>
<dbReference type="KEGG" id="smd:Smed_1573"/>
<dbReference type="PATRIC" id="fig|366394.8.peg.4711"/>
<dbReference type="eggNOG" id="COG0120">
    <property type="taxonomic scope" value="Bacteria"/>
</dbReference>
<dbReference type="HOGENOM" id="CLU_056590_1_0_5"/>
<dbReference type="OrthoDB" id="5870696at2"/>
<dbReference type="UniPathway" id="UPA00115">
    <property type="reaction ID" value="UER00412"/>
</dbReference>
<dbReference type="Proteomes" id="UP000001108">
    <property type="component" value="Chromosome"/>
</dbReference>
<dbReference type="GO" id="GO:0004751">
    <property type="term" value="F:ribose-5-phosphate isomerase activity"/>
    <property type="evidence" value="ECO:0007669"/>
    <property type="project" value="UniProtKB-UniRule"/>
</dbReference>
<dbReference type="GO" id="GO:0009052">
    <property type="term" value="P:pentose-phosphate shunt, non-oxidative branch"/>
    <property type="evidence" value="ECO:0007669"/>
    <property type="project" value="UniProtKB-UniRule"/>
</dbReference>
<dbReference type="CDD" id="cd01398">
    <property type="entry name" value="RPI_A"/>
    <property type="match status" value="1"/>
</dbReference>
<dbReference type="FunFam" id="3.40.50.1360:FF:000001">
    <property type="entry name" value="Ribose-5-phosphate isomerase A"/>
    <property type="match status" value="1"/>
</dbReference>
<dbReference type="Gene3D" id="3.30.70.260">
    <property type="match status" value="1"/>
</dbReference>
<dbReference type="Gene3D" id="3.40.50.1360">
    <property type="match status" value="1"/>
</dbReference>
<dbReference type="HAMAP" id="MF_00170">
    <property type="entry name" value="Rib_5P_isom_A"/>
    <property type="match status" value="1"/>
</dbReference>
<dbReference type="InterPro" id="IPR037171">
    <property type="entry name" value="NagB/RpiA_transferase-like"/>
</dbReference>
<dbReference type="InterPro" id="IPR050262">
    <property type="entry name" value="Ribose-5P_isomerase"/>
</dbReference>
<dbReference type="InterPro" id="IPR020672">
    <property type="entry name" value="Ribose5P_isomerase_typA_subgr"/>
</dbReference>
<dbReference type="InterPro" id="IPR004788">
    <property type="entry name" value="Ribose5P_isomerase_type_A"/>
</dbReference>
<dbReference type="NCBIfam" id="NF001924">
    <property type="entry name" value="PRK00702.1"/>
    <property type="match status" value="1"/>
</dbReference>
<dbReference type="NCBIfam" id="TIGR00021">
    <property type="entry name" value="rpiA"/>
    <property type="match status" value="1"/>
</dbReference>
<dbReference type="PANTHER" id="PTHR43748">
    <property type="entry name" value="RIBOSE-5-PHOSPHATE ISOMERASE 3, CHLOROPLASTIC-RELATED"/>
    <property type="match status" value="1"/>
</dbReference>
<dbReference type="PANTHER" id="PTHR43748:SF3">
    <property type="entry name" value="RIBOSE-5-PHOSPHATE ISOMERASE 3, CHLOROPLASTIC-RELATED"/>
    <property type="match status" value="1"/>
</dbReference>
<dbReference type="Pfam" id="PF06026">
    <property type="entry name" value="Rib_5-P_isom_A"/>
    <property type="match status" value="1"/>
</dbReference>
<dbReference type="SUPFAM" id="SSF75445">
    <property type="entry name" value="D-ribose-5-phosphate isomerase (RpiA), lid domain"/>
    <property type="match status" value="1"/>
</dbReference>
<dbReference type="SUPFAM" id="SSF100950">
    <property type="entry name" value="NagB/RpiA/CoA transferase-like"/>
    <property type="match status" value="1"/>
</dbReference>
<reference key="1">
    <citation type="submission" date="2007-06" db="EMBL/GenBank/DDBJ databases">
        <title>Complete sequence of Sinorhizobium medicae WSM419 chromosome.</title>
        <authorList>
            <consortium name="US DOE Joint Genome Institute"/>
            <person name="Copeland A."/>
            <person name="Lucas S."/>
            <person name="Lapidus A."/>
            <person name="Barry K."/>
            <person name="Glavina del Rio T."/>
            <person name="Dalin E."/>
            <person name="Tice H."/>
            <person name="Pitluck S."/>
            <person name="Chain P."/>
            <person name="Malfatti S."/>
            <person name="Shin M."/>
            <person name="Vergez L."/>
            <person name="Schmutz J."/>
            <person name="Larimer F."/>
            <person name="Land M."/>
            <person name="Hauser L."/>
            <person name="Kyrpides N."/>
            <person name="Mikhailova N."/>
            <person name="Reeve W.G."/>
            <person name="Richardson P."/>
        </authorList>
    </citation>
    <scope>NUCLEOTIDE SEQUENCE [LARGE SCALE GENOMIC DNA]</scope>
    <source>
        <strain>WSM419</strain>
    </source>
</reference>
<gene>
    <name evidence="1" type="primary">rpiA</name>
    <name type="ordered locus">Smed_1573</name>
</gene>
<comment type="function">
    <text evidence="1">Catalyzes the reversible conversion of ribose-5-phosphate to ribulose 5-phosphate.</text>
</comment>
<comment type="catalytic activity">
    <reaction evidence="1">
        <text>aldehydo-D-ribose 5-phosphate = D-ribulose 5-phosphate</text>
        <dbReference type="Rhea" id="RHEA:14657"/>
        <dbReference type="ChEBI" id="CHEBI:58121"/>
        <dbReference type="ChEBI" id="CHEBI:58273"/>
        <dbReference type="EC" id="5.3.1.6"/>
    </reaction>
</comment>
<comment type="pathway">
    <text evidence="1">Carbohydrate degradation; pentose phosphate pathway; D-ribose 5-phosphate from D-ribulose 5-phosphate (non-oxidative stage): step 1/1.</text>
</comment>
<comment type="subunit">
    <text evidence="1">Homodimer.</text>
</comment>
<comment type="similarity">
    <text evidence="1">Belongs to the ribose 5-phosphate isomerase family.</text>
</comment>
<proteinExistence type="inferred from homology"/>
<sequence>MDARQMKIKAAEAALEHVENGMRLGIGTGSTAEEFVRVLAEKVASGFQISGVPTSERTARLCLELGVPLKSLDELPELDLTIDGADEVDGKLRLIKGGGGALLREKIVASASARMIVIADETKVVDVLGAFKLPIEVNPFGQLATRLAIEKVASRLGLTGDIVVRASGDGPFMTDGGHLILDASFGRIPDADALAVELNAIPGVVEHGLFIEMASMAIIAGPEGARTLKAS</sequence>
<protein>
    <recommendedName>
        <fullName evidence="1">Ribose-5-phosphate isomerase A</fullName>
        <ecNumber evidence="1">5.3.1.6</ecNumber>
    </recommendedName>
    <alternativeName>
        <fullName evidence="1">Phosphoriboisomerase A</fullName>
        <shortName evidence="1">PRI</shortName>
    </alternativeName>
</protein>
<keyword id="KW-0413">Isomerase</keyword>
<feature type="chain" id="PRO_1000017002" description="Ribose-5-phosphate isomerase A">
    <location>
        <begin position="1"/>
        <end position="231"/>
    </location>
</feature>
<feature type="active site" description="Proton acceptor" evidence="1">
    <location>
        <position position="105"/>
    </location>
</feature>
<feature type="binding site" evidence="1">
    <location>
        <begin position="28"/>
        <end position="31"/>
    </location>
    <ligand>
        <name>substrate</name>
    </ligand>
</feature>
<feature type="binding site" evidence="1">
    <location>
        <begin position="83"/>
        <end position="86"/>
    </location>
    <ligand>
        <name>substrate</name>
    </ligand>
</feature>
<feature type="binding site" evidence="1">
    <location>
        <begin position="96"/>
        <end position="99"/>
    </location>
    <ligand>
        <name>substrate</name>
    </ligand>
</feature>
<feature type="binding site" evidence="1">
    <location>
        <position position="123"/>
    </location>
    <ligand>
        <name>substrate</name>
    </ligand>
</feature>
<accession>A6U9T4</accession>
<organism>
    <name type="scientific">Sinorhizobium medicae (strain WSM419)</name>
    <name type="common">Ensifer medicae</name>
    <dbReference type="NCBI Taxonomy" id="366394"/>
    <lineage>
        <taxon>Bacteria</taxon>
        <taxon>Pseudomonadati</taxon>
        <taxon>Pseudomonadota</taxon>
        <taxon>Alphaproteobacteria</taxon>
        <taxon>Hyphomicrobiales</taxon>
        <taxon>Rhizobiaceae</taxon>
        <taxon>Sinorhizobium/Ensifer group</taxon>
        <taxon>Sinorhizobium</taxon>
    </lineage>
</organism>
<name>RPIA_SINMW</name>